<proteinExistence type="inferred from homology"/>
<gene>
    <name evidence="1" type="primary">rsmH</name>
    <name type="synonym">mraW</name>
    <name type="ordered locus">VIBHAR_00894</name>
</gene>
<protein>
    <recommendedName>
        <fullName evidence="1">Ribosomal RNA small subunit methyltransferase H</fullName>
        <ecNumber evidence="1">2.1.1.199</ecNumber>
    </recommendedName>
    <alternativeName>
        <fullName evidence="1">16S rRNA m(4)C1402 methyltransferase</fullName>
    </alternativeName>
    <alternativeName>
        <fullName evidence="1">rRNA (cytosine-N(4)-)-methyltransferase RsmH</fullName>
    </alternativeName>
</protein>
<reference key="1">
    <citation type="submission" date="2007-08" db="EMBL/GenBank/DDBJ databases">
        <authorList>
            <consortium name="The Vibrio harveyi Genome Sequencing Project"/>
            <person name="Bassler B."/>
            <person name="Clifton S.W."/>
            <person name="Fulton L."/>
            <person name="Delehaunty K."/>
            <person name="Fronick C."/>
            <person name="Harrison M."/>
            <person name="Markivic C."/>
            <person name="Fulton R."/>
            <person name="Tin-Wollam A.-M."/>
            <person name="Shah N."/>
            <person name="Pepin K."/>
            <person name="Nash W."/>
            <person name="Thiruvilangam P."/>
            <person name="Bhonagiri V."/>
            <person name="Waters C."/>
            <person name="Tu K.C."/>
            <person name="Irgon J."/>
            <person name="Wilson R.K."/>
        </authorList>
    </citation>
    <scope>NUCLEOTIDE SEQUENCE [LARGE SCALE GENOMIC DNA]</scope>
    <source>
        <strain>ATCC BAA-1116 / BB120</strain>
    </source>
</reference>
<keyword id="KW-0963">Cytoplasm</keyword>
<keyword id="KW-0489">Methyltransferase</keyword>
<keyword id="KW-0698">rRNA processing</keyword>
<keyword id="KW-0949">S-adenosyl-L-methionine</keyword>
<keyword id="KW-0808">Transferase</keyword>
<dbReference type="EC" id="2.1.1.199" evidence="1"/>
<dbReference type="EMBL" id="CP000789">
    <property type="protein sequence ID" value="ABU69893.1"/>
    <property type="molecule type" value="Genomic_DNA"/>
</dbReference>
<dbReference type="RefSeq" id="WP_005528721.1">
    <property type="nucleotide sequence ID" value="NC_022269.1"/>
</dbReference>
<dbReference type="SMR" id="A7MWK7"/>
<dbReference type="GeneID" id="67378468"/>
<dbReference type="KEGG" id="vha:VIBHAR_00894"/>
<dbReference type="PATRIC" id="fig|338187.25.peg.1724"/>
<dbReference type="Proteomes" id="UP000008152">
    <property type="component" value="Chromosome I"/>
</dbReference>
<dbReference type="GO" id="GO:0005737">
    <property type="term" value="C:cytoplasm"/>
    <property type="evidence" value="ECO:0007669"/>
    <property type="project" value="UniProtKB-SubCell"/>
</dbReference>
<dbReference type="GO" id="GO:0071424">
    <property type="term" value="F:rRNA (cytosine-N4-)-methyltransferase activity"/>
    <property type="evidence" value="ECO:0007669"/>
    <property type="project" value="UniProtKB-UniRule"/>
</dbReference>
<dbReference type="GO" id="GO:0070475">
    <property type="term" value="P:rRNA base methylation"/>
    <property type="evidence" value="ECO:0007669"/>
    <property type="project" value="UniProtKB-UniRule"/>
</dbReference>
<dbReference type="FunFam" id="1.10.150.170:FF:000001">
    <property type="entry name" value="Ribosomal RNA small subunit methyltransferase H"/>
    <property type="match status" value="1"/>
</dbReference>
<dbReference type="Gene3D" id="1.10.150.170">
    <property type="entry name" value="Putative methyltransferase TM0872, insert domain"/>
    <property type="match status" value="1"/>
</dbReference>
<dbReference type="Gene3D" id="3.40.50.150">
    <property type="entry name" value="Vaccinia Virus protein VP39"/>
    <property type="match status" value="1"/>
</dbReference>
<dbReference type="HAMAP" id="MF_01007">
    <property type="entry name" value="16SrRNA_methyltr_H"/>
    <property type="match status" value="1"/>
</dbReference>
<dbReference type="InterPro" id="IPR002903">
    <property type="entry name" value="RsmH"/>
</dbReference>
<dbReference type="InterPro" id="IPR023397">
    <property type="entry name" value="SAM-dep_MeTrfase_MraW_recog"/>
</dbReference>
<dbReference type="InterPro" id="IPR029063">
    <property type="entry name" value="SAM-dependent_MTases_sf"/>
</dbReference>
<dbReference type="NCBIfam" id="TIGR00006">
    <property type="entry name" value="16S rRNA (cytosine(1402)-N(4))-methyltransferase RsmH"/>
    <property type="match status" value="1"/>
</dbReference>
<dbReference type="PANTHER" id="PTHR11265:SF0">
    <property type="entry name" value="12S RRNA N4-METHYLCYTIDINE METHYLTRANSFERASE"/>
    <property type="match status" value="1"/>
</dbReference>
<dbReference type="PANTHER" id="PTHR11265">
    <property type="entry name" value="S-ADENOSYL-METHYLTRANSFERASE MRAW"/>
    <property type="match status" value="1"/>
</dbReference>
<dbReference type="Pfam" id="PF01795">
    <property type="entry name" value="Methyltransf_5"/>
    <property type="match status" value="1"/>
</dbReference>
<dbReference type="PIRSF" id="PIRSF004486">
    <property type="entry name" value="MraW"/>
    <property type="match status" value="1"/>
</dbReference>
<dbReference type="SUPFAM" id="SSF81799">
    <property type="entry name" value="Putative methyltransferase TM0872, insert domain"/>
    <property type="match status" value="1"/>
</dbReference>
<dbReference type="SUPFAM" id="SSF53335">
    <property type="entry name" value="S-adenosyl-L-methionine-dependent methyltransferases"/>
    <property type="match status" value="1"/>
</dbReference>
<name>RSMH_VIBC1</name>
<comment type="function">
    <text evidence="1">Specifically methylates the N4 position of cytidine in position 1402 (C1402) of 16S rRNA.</text>
</comment>
<comment type="catalytic activity">
    <reaction evidence="1">
        <text>cytidine(1402) in 16S rRNA + S-adenosyl-L-methionine = N(4)-methylcytidine(1402) in 16S rRNA + S-adenosyl-L-homocysteine + H(+)</text>
        <dbReference type="Rhea" id="RHEA:42928"/>
        <dbReference type="Rhea" id="RHEA-COMP:10286"/>
        <dbReference type="Rhea" id="RHEA-COMP:10287"/>
        <dbReference type="ChEBI" id="CHEBI:15378"/>
        <dbReference type="ChEBI" id="CHEBI:57856"/>
        <dbReference type="ChEBI" id="CHEBI:59789"/>
        <dbReference type="ChEBI" id="CHEBI:74506"/>
        <dbReference type="ChEBI" id="CHEBI:82748"/>
        <dbReference type="EC" id="2.1.1.199"/>
    </reaction>
</comment>
<comment type="subcellular location">
    <subcellularLocation>
        <location evidence="1">Cytoplasm</location>
    </subcellularLocation>
</comment>
<comment type="similarity">
    <text evidence="1">Belongs to the methyltransferase superfamily. RsmH family.</text>
</comment>
<evidence type="ECO:0000255" key="1">
    <source>
        <dbReference type="HAMAP-Rule" id="MF_01007"/>
    </source>
</evidence>
<organism>
    <name type="scientific">Vibrio campbellii (strain ATCC BAA-1116)</name>
    <dbReference type="NCBI Taxonomy" id="2902295"/>
    <lineage>
        <taxon>Bacteria</taxon>
        <taxon>Pseudomonadati</taxon>
        <taxon>Pseudomonadota</taxon>
        <taxon>Gammaproteobacteria</taxon>
        <taxon>Vibrionales</taxon>
        <taxon>Vibrionaceae</taxon>
        <taxon>Vibrio</taxon>
    </lineage>
</organism>
<sequence>MTETFQHISVLLNESIDGLAIKPDGIYIDGTFGRGGHSRTILSKLGENGRLYSIDRDPQAIAEAAKIDDPRFTIIHGPFSGMAKYAEEYGLVGKVDGVLLDLGVSSPQLDDAERGFSFMKDGPLDMRMDPTSGIPVSQWLMEADLDDITWVIREFGEDKHARRIAKAIVAYREDEENEPMVRTGQLAKLISDAAPKSFKEKKHPATRAFQAFRIYINSELEEIDTALKGAASILAPEGRLSVISFHSLEDRMVKRFIRKESKGPEVPHGIPMTEEQIRALGSANMKPIGKANKPTKQEIDMNPRSRSSVLRIAEKL</sequence>
<feature type="chain" id="PRO_0000387210" description="Ribosomal RNA small subunit methyltransferase H">
    <location>
        <begin position="1"/>
        <end position="316"/>
    </location>
</feature>
<feature type="binding site" evidence="1">
    <location>
        <begin position="35"/>
        <end position="37"/>
    </location>
    <ligand>
        <name>S-adenosyl-L-methionine</name>
        <dbReference type="ChEBI" id="CHEBI:59789"/>
    </ligand>
</feature>
<feature type="binding site" evidence="1">
    <location>
        <position position="55"/>
    </location>
    <ligand>
        <name>S-adenosyl-L-methionine</name>
        <dbReference type="ChEBI" id="CHEBI:59789"/>
    </ligand>
</feature>
<feature type="binding site" evidence="1">
    <location>
        <position position="79"/>
    </location>
    <ligand>
        <name>S-adenosyl-L-methionine</name>
        <dbReference type="ChEBI" id="CHEBI:59789"/>
    </ligand>
</feature>
<feature type="binding site" evidence="1">
    <location>
        <position position="101"/>
    </location>
    <ligand>
        <name>S-adenosyl-L-methionine</name>
        <dbReference type="ChEBI" id="CHEBI:59789"/>
    </ligand>
</feature>
<feature type="binding site" evidence="1">
    <location>
        <position position="108"/>
    </location>
    <ligand>
        <name>S-adenosyl-L-methionine</name>
        <dbReference type="ChEBI" id="CHEBI:59789"/>
    </ligand>
</feature>
<accession>A7MWK7</accession>